<comment type="function">
    <text evidence="1">Binds as a heterodimer with protein bS6 to the central domain of the 16S rRNA, where it helps stabilize the platform of the 30S subunit.</text>
</comment>
<comment type="subunit">
    <text evidence="1">Part of the 30S ribosomal subunit. Forms a tight heterodimer with protein bS6.</text>
</comment>
<comment type="similarity">
    <text evidence="1">Belongs to the bacterial ribosomal protein bS18 family.</text>
</comment>
<accession>Q21WD4</accession>
<keyword id="KW-1185">Reference proteome</keyword>
<keyword id="KW-0687">Ribonucleoprotein</keyword>
<keyword id="KW-0689">Ribosomal protein</keyword>
<keyword id="KW-0694">RNA-binding</keyword>
<keyword id="KW-0699">rRNA-binding</keyword>
<reference key="1">
    <citation type="submission" date="2006-02" db="EMBL/GenBank/DDBJ databases">
        <title>Complete sequence of chromosome of Rhodoferax ferrireducens DSM 15236.</title>
        <authorList>
            <person name="Copeland A."/>
            <person name="Lucas S."/>
            <person name="Lapidus A."/>
            <person name="Barry K."/>
            <person name="Detter J.C."/>
            <person name="Glavina del Rio T."/>
            <person name="Hammon N."/>
            <person name="Israni S."/>
            <person name="Pitluck S."/>
            <person name="Brettin T."/>
            <person name="Bruce D."/>
            <person name="Han C."/>
            <person name="Tapia R."/>
            <person name="Gilna P."/>
            <person name="Kiss H."/>
            <person name="Schmutz J."/>
            <person name="Larimer F."/>
            <person name="Land M."/>
            <person name="Kyrpides N."/>
            <person name="Ivanova N."/>
            <person name="Richardson P."/>
        </authorList>
    </citation>
    <scope>NUCLEOTIDE SEQUENCE [LARGE SCALE GENOMIC DNA]</scope>
    <source>
        <strain>ATCC BAA-621 / DSM 15236 / T118</strain>
    </source>
</reference>
<organism>
    <name type="scientific">Albidiferax ferrireducens (strain ATCC BAA-621 / DSM 15236 / T118)</name>
    <name type="common">Rhodoferax ferrireducens</name>
    <dbReference type="NCBI Taxonomy" id="338969"/>
    <lineage>
        <taxon>Bacteria</taxon>
        <taxon>Pseudomonadati</taxon>
        <taxon>Pseudomonadota</taxon>
        <taxon>Betaproteobacteria</taxon>
        <taxon>Burkholderiales</taxon>
        <taxon>Comamonadaceae</taxon>
        <taxon>Rhodoferax</taxon>
    </lineage>
</organism>
<proteinExistence type="inferred from homology"/>
<sequence>MAGPKRFNNKDKRPKRPAQNLLFKRKRFCRFTVTGVEEIDYKDIDTLRDFIAENGKIIPARLTGTRAIFQRQLNTAIKRARFLAMLPYSDQHKI</sequence>
<protein>
    <recommendedName>
        <fullName evidence="1">Small ribosomal subunit protein bS18</fullName>
    </recommendedName>
    <alternativeName>
        <fullName evidence="2">30S ribosomal protein S18</fullName>
    </alternativeName>
</protein>
<dbReference type="EMBL" id="CP000267">
    <property type="protein sequence ID" value="ABD69919.1"/>
    <property type="molecule type" value="Genomic_DNA"/>
</dbReference>
<dbReference type="RefSeq" id="WP_011464487.1">
    <property type="nucleotide sequence ID" value="NC_007908.1"/>
</dbReference>
<dbReference type="SMR" id="Q21WD4"/>
<dbReference type="STRING" id="338969.Rfer_2195"/>
<dbReference type="KEGG" id="rfr:Rfer_2195"/>
<dbReference type="eggNOG" id="COG0238">
    <property type="taxonomic scope" value="Bacteria"/>
</dbReference>
<dbReference type="HOGENOM" id="CLU_148710_0_3_4"/>
<dbReference type="OrthoDB" id="9812008at2"/>
<dbReference type="Proteomes" id="UP000008332">
    <property type="component" value="Chromosome"/>
</dbReference>
<dbReference type="GO" id="GO:0022627">
    <property type="term" value="C:cytosolic small ribosomal subunit"/>
    <property type="evidence" value="ECO:0007669"/>
    <property type="project" value="TreeGrafter"/>
</dbReference>
<dbReference type="GO" id="GO:0070181">
    <property type="term" value="F:small ribosomal subunit rRNA binding"/>
    <property type="evidence" value="ECO:0007669"/>
    <property type="project" value="TreeGrafter"/>
</dbReference>
<dbReference type="GO" id="GO:0003735">
    <property type="term" value="F:structural constituent of ribosome"/>
    <property type="evidence" value="ECO:0007669"/>
    <property type="project" value="InterPro"/>
</dbReference>
<dbReference type="GO" id="GO:0006412">
    <property type="term" value="P:translation"/>
    <property type="evidence" value="ECO:0007669"/>
    <property type="project" value="UniProtKB-UniRule"/>
</dbReference>
<dbReference type="Gene3D" id="4.10.640.10">
    <property type="entry name" value="Ribosomal protein S18"/>
    <property type="match status" value="1"/>
</dbReference>
<dbReference type="HAMAP" id="MF_00270">
    <property type="entry name" value="Ribosomal_bS18"/>
    <property type="match status" value="1"/>
</dbReference>
<dbReference type="InterPro" id="IPR001648">
    <property type="entry name" value="Ribosomal_bS18"/>
</dbReference>
<dbReference type="InterPro" id="IPR036870">
    <property type="entry name" value="Ribosomal_bS18_sf"/>
</dbReference>
<dbReference type="NCBIfam" id="TIGR00165">
    <property type="entry name" value="S18"/>
    <property type="match status" value="1"/>
</dbReference>
<dbReference type="PANTHER" id="PTHR13479">
    <property type="entry name" value="30S RIBOSOMAL PROTEIN S18"/>
    <property type="match status" value="1"/>
</dbReference>
<dbReference type="PANTHER" id="PTHR13479:SF40">
    <property type="entry name" value="SMALL RIBOSOMAL SUBUNIT PROTEIN BS18M"/>
    <property type="match status" value="1"/>
</dbReference>
<dbReference type="Pfam" id="PF01084">
    <property type="entry name" value="Ribosomal_S18"/>
    <property type="match status" value="1"/>
</dbReference>
<dbReference type="PRINTS" id="PR00974">
    <property type="entry name" value="RIBOSOMALS18"/>
</dbReference>
<dbReference type="SUPFAM" id="SSF46911">
    <property type="entry name" value="Ribosomal protein S18"/>
    <property type="match status" value="1"/>
</dbReference>
<name>RS18_ALBFT</name>
<evidence type="ECO:0000255" key="1">
    <source>
        <dbReference type="HAMAP-Rule" id="MF_00270"/>
    </source>
</evidence>
<evidence type="ECO:0000305" key="2"/>
<gene>
    <name evidence="1" type="primary">rpsR</name>
    <name type="ordered locus">Rfer_2195</name>
</gene>
<feature type="chain" id="PRO_1000003583" description="Small ribosomal subunit protein bS18">
    <location>
        <begin position="1"/>
        <end position="94"/>
    </location>
</feature>